<sequence length="27" mass="2934">VGCEECPMHCKGKKALPTCDYGCECND</sequence>
<accession>B3EWX9</accession>
<name>KAX9B_MESGB</name>
<evidence type="ECO:0000250" key="1">
    <source>
        <dbReference type="UniProtKB" id="P0C909"/>
    </source>
</evidence>
<evidence type="ECO:0000250" key="2">
    <source>
        <dbReference type="UniProtKB" id="Q9NJP7"/>
    </source>
</evidence>
<evidence type="ECO:0000255" key="3"/>
<evidence type="ECO:0000269" key="4">
    <source>
    </source>
</evidence>
<evidence type="ECO:0000303" key="5">
    <source>
    </source>
</evidence>
<evidence type="ECO:0000305" key="6">
    <source>
    </source>
</evidence>
<protein>
    <recommendedName>
        <fullName evidence="1">Potassium channel toxin alpha-KTx 9.11</fullName>
    </recommendedName>
    <alternativeName>
        <fullName evidence="5">Toxin MegKTx2</fullName>
    </alternativeName>
</protein>
<keyword id="KW-0903">Direct protein sequencing</keyword>
<keyword id="KW-1015">Disulfide bond</keyword>
<keyword id="KW-0872">Ion channel impairing toxin</keyword>
<keyword id="KW-0632">Potassium channel impairing toxin</keyword>
<keyword id="KW-0964">Secreted</keyword>
<keyword id="KW-0800">Toxin</keyword>
<keyword id="KW-1220">Voltage-gated potassium channel impairing toxin</keyword>
<feature type="peptide" id="PRO_0000421237" description="Potassium channel toxin alpha-KTx 9.11" evidence="4">
    <location>
        <begin position="1"/>
        <end position="27"/>
    </location>
</feature>
<feature type="disulfide bond" evidence="2">
    <location>
        <begin position="3"/>
        <end position="19"/>
    </location>
</feature>
<feature type="disulfide bond" evidence="2">
    <location>
        <begin position="6"/>
        <end position="23"/>
    </location>
</feature>
<feature type="disulfide bond" evidence="2">
    <location>
        <begin position="10"/>
        <end position="25"/>
    </location>
</feature>
<organism>
    <name type="scientific">Mesobuthus gibbosus</name>
    <name type="common">Mediterranean checkered scorpion</name>
    <name type="synonym">Buthus gibbosus</name>
    <dbReference type="NCBI Taxonomy" id="123226"/>
    <lineage>
        <taxon>Eukaryota</taxon>
        <taxon>Metazoa</taxon>
        <taxon>Ecdysozoa</taxon>
        <taxon>Arthropoda</taxon>
        <taxon>Chelicerata</taxon>
        <taxon>Arachnida</taxon>
        <taxon>Scorpiones</taxon>
        <taxon>Buthida</taxon>
        <taxon>Buthoidea</taxon>
        <taxon>Buthidae</taxon>
        <taxon>Mesobuthus</taxon>
    </lineage>
</organism>
<reference key="1">
    <citation type="journal article" date="2013" name="Toxicon">
        <title>Novel potassium channel blocker venom peptides from Mesobuthus gibbosus (Scorpiones: Buthidae).</title>
        <authorList>
            <person name="Diego-Garcia E."/>
            <person name="Peigneur S."/>
            <person name="Debaveye S."/>
            <person name="Gheldof E."/>
            <person name="Tytgat J."/>
            <person name="Caliskan F."/>
        </authorList>
    </citation>
    <scope>PROTEIN SEQUENCE</scope>
    <scope>FUNCTION</scope>
    <source>
        <tissue>Venom</tissue>
    </source>
</reference>
<proteinExistence type="evidence at protein level"/>
<dbReference type="SMR" id="B3EWX9"/>
<dbReference type="GO" id="GO:0005576">
    <property type="term" value="C:extracellular region"/>
    <property type="evidence" value="ECO:0007669"/>
    <property type="project" value="UniProtKB-SubCell"/>
</dbReference>
<dbReference type="GO" id="GO:0008200">
    <property type="term" value="F:ion channel inhibitor activity"/>
    <property type="evidence" value="ECO:0007669"/>
    <property type="project" value="InterPro"/>
</dbReference>
<dbReference type="GO" id="GO:0015459">
    <property type="term" value="F:potassium channel regulator activity"/>
    <property type="evidence" value="ECO:0007669"/>
    <property type="project" value="UniProtKB-KW"/>
</dbReference>
<dbReference type="GO" id="GO:0090729">
    <property type="term" value="F:toxin activity"/>
    <property type="evidence" value="ECO:0007669"/>
    <property type="project" value="UniProtKB-KW"/>
</dbReference>
<dbReference type="InterPro" id="IPR036574">
    <property type="entry name" value="Scorpion_toxin-like_sf"/>
</dbReference>
<dbReference type="InterPro" id="IPR008911">
    <property type="entry name" value="Toxin_alpha-KTx_8/9"/>
</dbReference>
<dbReference type="Pfam" id="PF05453">
    <property type="entry name" value="Toxin_6"/>
    <property type="match status" value="1"/>
</dbReference>
<dbReference type="SUPFAM" id="SSF57095">
    <property type="entry name" value="Scorpion toxin-like"/>
    <property type="match status" value="1"/>
</dbReference>
<comment type="function">
    <text evidence="4">May play a role in blocking voltage-gated potassium channels Kv1.2/KCNA2, Kv1.3/KCNA3 and Kv1.6/KCNA6 to a lesser extent.</text>
</comment>
<comment type="subcellular location">
    <subcellularLocation>
        <location evidence="4">Secreted</location>
    </subcellularLocation>
</comment>
<comment type="tissue specificity">
    <text evidence="6">Expressed by the venom gland.</text>
</comment>
<comment type="domain">
    <text evidence="2">Has the structural arrangement of an alpha-helix connected to a beta-sheet by disulfide bonds (CSalpha/beta).</text>
</comment>
<comment type="miscellaneous">
    <text evidence="6">Negative results: has no effect on rat Kv1.1/KCNA1, Kv1.4/KCNA4 and Kv1.5/KCNA5 voltage-gated potassium channels.</text>
</comment>
<comment type="similarity">
    <text evidence="3">Belongs to the short scorpion toxin superfamily. Potassium channel inhibitor family. Alpha-KTx 09 subfamily.</text>
</comment>